<keyword id="KW-0067">ATP-binding</keyword>
<keyword id="KW-0143">Chaperone</keyword>
<keyword id="KW-0963">Cytoplasm</keyword>
<keyword id="KW-0413">Isomerase</keyword>
<keyword id="KW-0547">Nucleotide-binding</keyword>
<comment type="function">
    <text evidence="2">Together with its co-chaperonin GroES, plays an essential role in assisting protein folding. The GroEL-GroES system forms a nano-cage that allows encapsulation of the non-native substrate proteins and provides a physical environment optimized to promote and accelerate protein folding.</text>
</comment>
<comment type="catalytic activity">
    <reaction evidence="2">
        <text>ATP + H2O + a folded polypeptide = ADP + phosphate + an unfolded polypeptide.</text>
        <dbReference type="EC" id="5.6.1.7"/>
    </reaction>
</comment>
<comment type="subunit">
    <text evidence="2">Forms a cylinder of 14 subunits composed of two heptameric rings stacked back-to-back. Interacts with the co-chaperonin GroES.</text>
</comment>
<comment type="subcellular location">
    <subcellularLocation>
        <location evidence="2">Cytoplasm</location>
    </subcellularLocation>
</comment>
<comment type="similarity">
    <text evidence="2 3">Belongs to the chaperonin (HSP60) family.</text>
</comment>
<gene>
    <name evidence="2" type="primary">groEL2</name>
    <name evidence="2" type="synonym">groL2</name>
</gene>
<feature type="initiator methionine" description="Removed" evidence="1">
    <location>
        <position position="1"/>
    </location>
</feature>
<feature type="chain" id="PRO_0000063554" description="Chaperonin GroEL 2">
    <location>
        <begin position="2"/>
        <end position="477"/>
    </location>
</feature>
<feature type="binding site" evidence="2">
    <location>
        <begin position="29"/>
        <end position="32"/>
    </location>
    <ligand>
        <name>ATP</name>
        <dbReference type="ChEBI" id="CHEBI:30616"/>
    </ligand>
</feature>
<feature type="binding site" evidence="2">
    <location>
        <begin position="86"/>
        <end position="90"/>
    </location>
    <ligand>
        <name>ATP</name>
        <dbReference type="ChEBI" id="CHEBI:30616"/>
    </ligand>
</feature>
<feature type="binding site" evidence="2">
    <location>
        <position position="416"/>
    </location>
    <ligand>
        <name>ATP</name>
        <dbReference type="ChEBI" id="CHEBI:30616"/>
    </ligand>
</feature>
<name>CH602_STRLI</name>
<dbReference type="EC" id="5.6.1.7" evidence="2"/>
<dbReference type="EMBL" id="X95971">
    <property type="protein sequence ID" value="CAA65226.1"/>
    <property type="molecule type" value="Genomic_DNA"/>
</dbReference>
<dbReference type="SMR" id="O33658"/>
<dbReference type="GO" id="GO:0005737">
    <property type="term" value="C:cytoplasm"/>
    <property type="evidence" value="ECO:0007669"/>
    <property type="project" value="UniProtKB-SubCell"/>
</dbReference>
<dbReference type="GO" id="GO:0005524">
    <property type="term" value="F:ATP binding"/>
    <property type="evidence" value="ECO:0007669"/>
    <property type="project" value="UniProtKB-KW"/>
</dbReference>
<dbReference type="GO" id="GO:0140662">
    <property type="term" value="F:ATP-dependent protein folding chaperone"/>
    <property type="evidence" value="ECO:0007669"/>
    <property type="project" value="InterPro"/>
</dbReference>
<dbReference type="GO" id="GO:0016853">
    <property type="term" value="F:isomerase activity"/>
    <property type="evidence" value="ECO:0007669"/>
    <property type="project" value="UniProtKB-KW"/>
</dbReference>
<dbReference type="GO" id="GO:0042026">
    <property type="term" value="P:protein refolding"/>
    <property type="evidence" value="ECO:0007669"/>
    <property type="project" value="InterPro"/>
</dbReference>
<dbReference type="CDD" id="cd03344">
    <property type="entry name" value="GroEL"/>
    <property type="match status" value="1"/>
</dbReference>
<dbReference type="FunFam" id="3.50.7.10:FF:000001">
    <property type="entry name" value="60 kDa chaperonin"/>
    <property type="match status" value="1"/>
</dbReference>
<dbReference type="Gene3D" id="3.50.7.10">
    <property type="entry name" value="GroEL"/>
    <property type="match status" value="1"/>
</dbReference>
<dbReference type="Gene3D" id="1.10.560.10">
    <property type="entry name" value="GroEL-like equatorial domain"/>
    <property type="match status" value="1"/>
</dbReference>
<dbReference type="Gene3D" id="3.30.260.10">
    <property type="entry name" value="TCP-1-like chaperonin intermediate domain"/>
    <property type="match status" value="1"/>
</dbReference>
<dbReference type="InterPro" id="IPR018370">
    <property type="entry name" value="Chaperonin_Cpn60_CS"/>
</dbReference>
<dbReference type="InterPro" id="IPR001844">
    <property type="entry name" value="Cpn60/GroEL"/>
</dbReference>
<dbReference type="InterPro" id="IPR002423">
    <property type="entry name" value="Cpn60/GroEL/TCP-1"/>
</dbReference>
<dbReference type="InterPro" id="IPR027409">
    <property type="entry name" value="GroEL-like_apical_dom_sf"/>
</dbReference>
<dbReference type="InterPro" id="IPR027413">
    <property type="entry name" value="GROEL-like_equatorial_sf"/>
</dbReference>
<dbReference type="InterPro" id="IPR027410">
    <property type="entry name" value="TCP-1-like_intermed_sf"/>
</dbReference>
<dbReference type="NCBIfam" id="TIGR02348">
    <property type="entry name" value="GroEL"/>
    <property type="match status" value="1"/>
</dbReference>
<dbReference type="NCBIfam" id="NF000592">
    <property type="entry name" value="PRK00013.1"/>
    <property type="match status" value="1"/>
</dbReference>
<dbReference type="NCBIfam" id="NF009487">
    <property type="entry name" value="PRK12849.1"/>
    <property type="match status" value="1"/>
</dbReference>
<dbReference type="NCBIfam" id="NF009488">
    <property type="entry name" value="PRK12850.1"/>
    <property type="match status" value="1"/>
</dbReference>
<dbReference type="NCBIfam" id="NF009489">
    <property type="entry name" value="PRK12851.1"/>
    <property type="match status" value="1"/>
</dbReference>
<dbReference type="PANTHER" id="PTHR45633">
    <property type="entry name" value="60 KDA HEAT SHOCK PROTEIN, MITOCHONDRIAL"/>
    <property type="match status" value="1"/>
</dbReference>
<dbReference type="Pfam" id="PF00118">
    <property type="entry name" value="Cpn60_TCP1"/>
    <property type="match status" value="1"/>
</dbReference>
<dbReference type="PRINTS" id="PR00298">
    <property type="entry name" value="CHAPERONIN60"/>
</dbReference>
<dbReference type="SUPFAM" id="SSF52029">
    <property type="entry name" value="GroEL apical domain-like"/>
    <property type="match status" value="1"/>
</dbReference>
<dbReference type="SUPFAM" id="SSF48592">
    <property type="entry name" value="GroEL equatorial domain-like"/>
    <property type="match status" value="2"/>
</dbReference>
<dbReference type="PROSITE" id="PS00296">
    <property type="entry name" value="CHAPERONINS_CPN60"/>
    <property type="match status" value="1"/>
</dbReference>
<organism>
    <name type="scientific">Streptomyces lividans</name>
    <dbReference type="NCBI Taxonomy" id="1916"/>
    <lineage>
        <taxon>Bacteria</taxon>
        <taxon>Bacillati</taxon>
        <taxon>Actinomycetota</taxon>
        <taxon>Actinomycetes</taxon>
        <taxon>Kitasatosporales</taxon>
        <taxon>Streptomycetaceae</taxon>
        <taxon>Streptomyces</taxon>
    </lineage>
</organism>
<reference key="1">
    <citation type="journal article" date="1997" name="Microbiology">
        <title>Streptomyces lividans groES, groEL1 and groEL2 genes.</title>
        <authorList>
            <person name="de Leon P."/>
            <person name="Marco S."/>
            <person name="Isiegas C."/>
            <person name="Marina A."/>
            <person name="Carrascosa J.L."/>
            <person name="Mellado R.P."/>
        </authorList>
    </citation>
    <scope>NUCLEOTIDE SEQUENCE [GENOMIC DNA]</scope>
    <source>
        <strain>TK21</strain>
    </source>
</reference>
<proteinExistence type="inferred from homology"/>
<protein>
    <recommendedName>
        <fullName evidence="2">Chaperonin GroEL 2</fullName>
        <ecNumber evidence="2">5.6.1.7</ecNumber>
    </recommendedName>
    <alternativeName>
        <fullName evidence="2">60 kDa chaperonin 2</fullName>
    </alternativeName>
    <alternativeName>
        <fullName evidence="2">Chaperonin-60 2</fullName>
        <shortName evidence="2">Cpn60 2</shortName>
    </alternativeName>
</protein>
<evidence type="ECO:0000250" key="1"/>
<evidence type="ECO:0000255" key="2">
    <source>
        <dbReference type="HAMAP-Rule" id="MF_00600"/>
    </source>
</evidence>
<evidence type="ECO:0000305" key="3"/>
<accession>O33658</accession>
<sequence length="477" mass="50661">MAKIIAFDEKARRGLEGGMNQLADAVKVTLGPKGRNVVLEKKWGAPTITNDGVSIAKEIELEDPYEKIGAELVKEVAKKTDDVAGDGTTTATVLAQALVKEGLRNVAAGANPMALKRGIEKAVEAVSGALLEQAKDVETKEQIASTASISAADTQIGELIAEAMDKVGKEGVITVEEFQTFGLELELTEGMGFDKGYISAYFATDMERMEASLDDPYILIANSKIGNVKDLLPLLEKVMQSGKPLLIIAEDVEGEALSTLVVNKIRGTFKSVAVKAPGFGDRRKAMLGDIAILTGGEVISEEVGLKLENAGLDLLGRARKVVITKDETTIVDGAGDTDQVNGRVAQIRAEIENSDSDYDREKLQERLANVAGGVAVIKAGAATEVELKERKERKHRIEDAVRNAKAAVEEGIVAGGGVALLQASQVFEKLELTGDEATGANAVKLALEAPLKQIPSTAVSRAAWSWRRCATSPWATA</sequence>